<gene>
    <name type="primary">iap</name>
</gene>
<proteinExistence type="inferred from homology"/>
<keyword id="KW-0378">Hydrolase</keyword>
<keyword id="KW-0645">Protease</keyword>
<keyword id="KW-0677">Repeat</keyword>
<keyword id="KW-0732">Signal</keyword>
<keyword id="KW-0788">Thiol protease</keyword>
<organism>
    <name type="scientific">Listeria seeligeri</name>
    <dbReference type="NCBI Taxonomy" id="1640"/>
    <lineage>
        <taxon>Bacteria</taxon>
        <taxon>Bacillati</taxon>
        <taxon>Bacillota</taxon>
        <taxon>Bacilli</taxon>
        <taxon>Bacillales</taxon>
        <taxon>Listeriaceae</taxon>
        <taxon>Listeria</taxon>
    </lineage>
</organism>
<reference key="1">
    <citation type="journal article" date="1992" name="Appl. Environ. Microbiol.">
        <title>The homologous and heterologous regions within the iap gene allow genus- and species-specific identification of Listeria spp. by polymerase chain reaction.</title>
        <authorList>
            <person name="Bubert A."/>
            <person name="Koehler S."/>
            <person name="Goebel W."/>
        </authorList>
    </citation>
    <scope>NUCLEOTIDE SEQUENCE [GENOMIC DNA]</scope>
</reference>
<reference key="2">
    <citation type="journal article" date="1992" name="J. Bacteriol.">
        <title>Structural and functional properties of the p60 proteins from different Listeria species.</title>
        <authorList>
            <person name="Bubert A."/>
            <person name="Kuhn M."/>
            <person name="Goebel W."/>
            <person name="Koehler S."/>
        </authorList>
    </citation>
    <scope>DISCUSSION OF SEQUENCE</scope>
</reference>
<sequence>MNMKKATIAATAGIAVTAFAAPTIASASTVVVEAGDTLWGIAQDNGTTVDALKKANKLTTDKIVPGQKLQVTEVASEKTEKSVSATWLNVRSGAGVDNSIVTSLKGGTKVTVESTEANGWNKITYGEGKTGYVNGKYLGNAVTSAPSATPEVKQEETTQAAPAQQTKTEVKQATPAATTEKDAVETKTTAPAVDTNATTHTVKSGDTIWALSVKYGASVQDLMSWNNLSSSSIYVGQNIAVKQSAAKNTAPKAEAKTEAPAAEKQTAAPVVKESTNTSTTTTVKKETTTEKQTSTTKAPAQAAKPAPAPAPTVNTNASSYTVKSGDTLGKIASTFGTTVSKIKALNGLTSDNLQVGDVLKVKGTVPATNTNTATAPTTNTNNNTSSSNTSTPSKNNNTNQSSSNSSSASAIIAEAQKHLGKAYSWGGNGPTTFDCSGFTSYVFAQSGITLPRTSGAQYASTTKVSESEAQPGDLVFFDYGSGIAHVGIYVGNGQMINAQDNGVKYDNIHGSGWGQYLVGFGRV</sequence>
<comment type="function">
    <text>This major extracellular protein may be involved in the invasion of non-professional phagocytic cells by Listeria.</text>
</comment>
<comment type="domain">
    <text>LysM domains are thought to be involved in peptidoglycan binding.</text>
</comment>
<comment type="similarity">
    <text evidence="4 6">Belongs to the peptidase C40 family.</text>
</comment>
<feature type="signal peptide" evidence="1">
    <location>
        <begin position="1"/>
        <end position="27"/>
    </location>
</feature>
<feature type="chain" id="PRO_0000019761" description="Probable endopeptidase p60">
    <location>
        <begin position="28"/>
        <end position="523"/>
    </location>
</feature>
<feature type="domain" description="LysM 1" evidence="3">
    <location>
        <begin position="28"/>
        <end position="71"/>
    </location>
</feature>
<feature type="domain" description="SH3b" evidence="2">
    <location>
        <begin position="78"/>
        <end position="142"/>
    </location>
</feature>
<feature type="domain" description="LysM 2" evidence="3">
    <location>
        <begin position="198"/>
        <end position="241"/>
    </location>
</feature>
<feature type="domain" description="LysM 3" evidence="3">
    <location>
        <begin position="318"/>
        <end position="361"/>
    </location>
</feature>
<feature type="domain" description="NlpC/P60" evidence="4">
    <location>
        <begin position="405"/>
        <end position="523"/>
    </location>
</feature>
<feature type="region of interest" description="Disordered" evidence="5">
    <location>
        <begin position="146"/>
        <end position="188"/>
    </location>
</feature>
<feature type="region of interest" description="Disordered" evidence="5">
    <location>
        <begin position="251"/>
        <end position="323"/>
    </location>
</feature>
<feature type="region of interest" description="Disordered" evidence="5">
    <location>
        <begin position="367"/>
        <end position="408"/>
    </location>
</feature>
<feature type="compositionally biased region" description="Low complexity" evidence="5">
    <location>
        <begin position="157"/>
        <end position="167"/>
    </location>
</feature>
<feature type="compositionally biased region" description="Low complexity" evidence="5">
    <location>
        <begin position="251"/>
        <end position="282"/>
    </location>
</feature>
<feature type="compositionally biased region" description="Low complexity" evidence="5">
    <location>
        <begin position="290"/>
        <end position="318"/>
    </location>
</feature>
<feature type="active site" description="Nucleophile" evidence="4">
    <location>
        <position position="435"/>
    </location>
</feature>
<feature type="active site" description="Proton acceptor" evidence="4">
    <location>
        <position position="485"/>
    </location>
</feature>
<feature type="active site" evidence="4">
    <location>
        <position position="497"/>
    </location>
</feature>
<accession>Q01838</accession>
<evidence type="ECO:0000250" key="1"/>
<evidence type="ECO:0000255" key="2">
    <source>
        <dbReference type="PROSITE-ProRule" id="PRU01117"/>
    </source>
</evidence>
<evidence type="ECO:0000255" key="3">
    <source>
        <dbReference type="PROSITE-ProRule" id="PRU01118"/>
    </source>
</evidence>
<evidence type="ECO:0000255" key="4">
    <source>
        <dbReference type="PROSITE-ProRule" id="PRU01284"/>
    </source>
</evidence>
<evidence type="ECO:0000256" key="5">
    <source>
        <dbReference type="SAM" id="MobiDB-lite"/>
    </source>
</evidence>
<evidence type="ECO:0000305" key="6"/>
<protein>
    <recommendedName>
        <fullName>Probable endopeptidase p60</fullName>
        <ecNumber>3.4.-.-</ecNumber>
    </recommendedName>
    <alternativeName>
        <fullName>Invasion-associated protein p60</fullName>
    </alternativeName>
</protein>
<dbReference type="EC" id="3.4.-.-"/>
<dbReference type="EMBL" id="M80353">
    <property type="protein sequence ID" value="AAA25286.1"/>
    <property type="molecule type" value="Genomic_DNA"/>
</dbReference>
<dbReference type="SMR" id="Q01838"/>
<dbReference type="STRING" id="683837.lse_0492"/>
<dbReference type="eggNOG" id="COG0791">
    <property type="taxonomic scope" value="Bacteria"/>
</dbReference>
<dbReference type="eggNOG" id="COG1388">
    <property type="taxonomic scope" value="Bacteria"/>
</dbReference>
<dbReference type="eggNOG" id="COG3103">
    <property type="taxonomic scope" value="Bacteria"/>
</dbReference>
<dbReference type="OMA" id="MNMKKAT"/>
<dbReference type="GO" id="GO:0008234">
    <property type="term" value="F:cysteine-type peptidase activity"/>
    <property type="evidence" value="ECO:0007669"/>
    <property type="project" value="UniProtKB-KW"/>
</dbReference>
<dbReference type="GO" id="GO:0006508">
    <property type="term" value="P:proteolysis"/>
    <property type="evidence" value="ECO:0007669"/>
    <property type="project" value="UniProtKB-KW"/>
</dbReference>
<dbReference type="CDD" id="cd00118">
    <property type="entry name" value="LysM"/>
    <property type="match status" value="3"/>
</dbReference>
<dbReference type="Gene3D" id="3.90.1720.10">
    <property type="entry name" value="endopeptidase domain like (from Nostoc punctiforme)"/>
    <property type="match status" value="1"/>
</dbReference>
<dbReference type="Gene3D" id="3.10.350.10">
    <property type="entry name" value="LysM domain"/>
    <property type="match status" value="3"/>
</dbReference>
<dbReference type="Gene3D" id="2.30.30.40">
    <property type="entry name" value="SH3 Domains"/>
    <property type="match status" value="1"/>
</dbReference>
<dbReference type="InterPro" id="IPR018392">
    <property type="entry name" value="LysM_dom"/>
</dbReference>
<dbReference type="InterPro" id="IPR036779">
    <property type="entry name" value="LysM_dom_sf"/>
</dbReference>
<dbReference type="InterPro" id="IPR000064">
    <property type="entry name" value="NLP_P60_dom"/>
</dbReference>
<dbReference type="InterPro" id="IPR038765">
    <property type="entry name" value="Papain-like_cys_pep_sf"/>
</dbReference>
<dbReference type="InterPro" id="IPR051202">
    <property type="entry name" value="Peptidase_C40"/>
</dbReference>
<dbReference type="InterPro" id="IPR003646">
    <property type="entry name" value="SH3-like_bac-type"/>
</dbReference>
<dbReference type="NCBIfam" id="NF010495">
    <property type="entry name" value="PRK13914.1"/>
    <property type="match status" value="1"/>
</dbReference>
<dbReference type="PANTHER" id="PTHR47053">
    <property type="entry name" value="MUREIN DD-ENDOPEPTIDASE MEPH-RELATED"/>
    <property type="match status" value="1"/>
</dbReference>
<dbReference type="PANTHER" id="PTHR47053:SF1">
    <property type="entry name" value="MUREIN DD-ENDOPEPTIDASE MEPH-RELATED"/>
    <property type="match status" value="1"/>
</dbReference>
<dbReference type="Pfam" id="PF01476">
    <property type="entry name" value="LysM"/>
    <property type="match status" value="3"/>
</dbReference>
<dbReference type="Pfam" id="PF00877">
    <property type="entry name" value="NLPC_P60"/>
    <property type="match status" value="1"/>
</dbReference>
<dbReference type="Pfam" id="PF08239">
    <property type="entry name" value="SH3_3"/>
    <property type="match status" value="1"/>
</dbReference>
<dbReference type="SMART" id="SM00257">
    <property type="entry name" value="LysM"/>
    <property type="match status" value="3"/>
</dbReference>
<dbReference type="SMART" id="SM00287">
    <property type="entry name" value="SH3b"/>
    <property type="match status" value="1"/>
</dbReference>
<dbReference type="SUPFAM" id="SSF54001">
    <property type="entry name" value="Cysteine proteinases"/>
    <property type="match status" value="1"/>
</dbReference>
<dbReference type="SUPFAM" id="SSF54106">
    <property type="entry name" value="LysM domain"/>
    <property type="match status" value="3"/>
</dbReference>
<dbReference type="PROSITE" id="PS51782">
    <property type="entry name" value="LYSM"/>
    <property type="match status" value="3"/>
</dbReference>
<dbReference type="PROSITE" id="PS51935">
    <property type="entry name" value="NLPC_P60"/>
    <property type="match status" value="1"/>
</dbReference>
<dbReference type="PROSITE" id="PS51781">
    <property type="entry name" value="SH3B"/>
    <property type="match status" value="1"/>
</dbReference>
<name>P60_LISSE</name>